<name>RNP4_THEKO</name>
<accession>Q5JEC9</accession>
<keyword id="KW-0963">Cytoplasm</keyword>
<keyword id="KW-0255">Endonuclease</keyword>
<keyword id="KW-0378">Hydrolase</keyword>
<keyword id="KW-0479">Metal-binding</keyword>
<keyword id="KW-0540">Nuclease</keyword>
<keyword id="KW-1185">Reference proteome</keyword>
<keyword id="KW-0819">tRNA processing</keyword>
<keyword id="KW-0862">Zinc</keyword>
<dbReference type="EC" id="3.1.26.5" evidence="1"/>
<dbReference type="EMBL" id="AP006878">
    <property type="protein sequence ID" value="BAD84220.1"/>
    <property type="molecule type" value="Genomic_DNA"/>
</dbReference>
<dbReference type="RefSeq" id="WP_011248986.1">
    <property type="nucleotide sequence ID" value="NC_006624.1"/>
</dbReference>
<dbReference type="SMR" id="Q5JEC9"/>
<dbReference type="STRING" id="69014.TK0031"/>
<dbReference type="EnsemblBacteria" id="BAD84220">
    <property type="protein sequence ID" value="BAD84220"/>
    <property type="gene ID" value="TK0031"/>
</dbReference>
<dbReference type="GeneID" id="78446531"/>
<dbReference type="KEGG" id="tko:TK0031"/>
<dbReference type="PATRIC" id="fig|69014.16.peg.31"/>
<dbReference type="eggNOG" id="arCOG04345">
    <property type="taxonomic scope" value="Archaea"/>
</dbReference>
<dbReference type="HOGENOM" id="CLU_079140_3_1_2"/>
<dbReference type="InParanoid" id="Q5JEC9"/>
<dbReference type="OrthoDB" id="10058at2157"/>
<dbReference type="PhylomeDB" id="Q5JEC9"/>
<dbReference type="Proteomes" id="UP000000536">
    <property type="component" value="Chromosome"/>
</dbReference>
<dbReference type="GO" id="GO:0005737">
    <property type="term" value="C:cytoplasm"/>
    <property type="evidence" value="ECO:0007669"/>
    <property type="project" value="UniProtKB-SubCell"/>
</dbReference>
<dbReference type="GO" id="GO:0030677">
    <property type="term" value="C:ribonuclease P complex"/>
    <property type="evidence" value="ECO:0007669"/>
    <property type="project" value="UniProtKB-UniRule"/>
</dbReference>
<dbReference type="GO" id="GO:0004526">
    <property type="term" value="F:ribonuclease P activity"/>
    <property type="evidence" value="ECO:0007669"/>
    <property type="project" value="UniProtKB-UniRule"/>
</dbReference>
<dbReference type="GO" id="GO:0008270">
    <property type="term" value="F:zinc ion binding"/>
    <property type="evidence" value="ECO:0007669"/>
    <property type="project" value="UniProtKB-UniRule"/>
</dbReference>
<dbReference type="GO" id="GO:0001682">
    <property type="term" value="P:tRNA 5'-leader removal"/>
    <property type="evidence" value="ECO:0007669"/>
    <property type="project" value="UniProtKB-UniRule"/>
</dbReference>
<dbReference type="Gene3D" id="6.20.50.20">
    <property type="match status" value="1"/>
</dbReference>
<dbReference type="Gene3D" id="1.20.5.420">
    <property type="entry name" value="Immunoglobulin FC, subunit C"/>
    <property type="match status" value="1"/>
</dbReference>
<dbReference type="HAMAP" id="MF_00757">
    <property type="entry name" value="RNase_P_4"/>
    <property type="match status" value="1"/>
</dbReference>
<dbReference type="InterPro" id="IPR016432">
    <property type="entry name" value="RNP4"/>
</dbReference>
<dbReference type="InterPro" id="IPR007175">
    <property type="entry name" value="Rpr2/Snm1/Rpp21"/>
</dbReference>
<dbReference type="NCBIfam" id="NF003045">
    <property type="entry name" value="PRK03954.1"/>
    <property type="match status" value="1"/>
</dbReference>
<dbReference type="PANTHER" id="PTHR14742:SF0">
    <property type="entry name" value="RIBONUCLEASE P PROTEIN SUBUNIT P21"/>
    <property type="match status" value="1"/>
</dbReference>
<dbReference type="PANTHER" id="PTHR14742">
    <property type="entry name" value="RIBONUCLEASE P SUBUNIT P21"/>
    <property type="match status" value="1"/>
</dbReference>
<dbReference type="Pfam" id="PF04032">
    <property type="entry name" value="Rpr2"/>
    <property type="match status" value="1"/>
</dbReference>
<dbReference type="PIRSF" id="PIRSF004878">
    <property type="entry name" value="RNase_P_4"/>
    <property type="match status" value="1"/>
</dbReference>
<sequence length="132" mass="15785">MGKKDIRRKEQREKKRIARERVETLFTLAERVFPYSPELANRYVEIALSVQQKAKIRMPRKWKRRYCKKCHSFLVPGVNARVRLRDKPYPHVVITCLNCGNIMRYPYLREKKARRKYASKSTENGNGPDWTS</sequence>
<protein>
    <recommendedName>
        <fullName evidence="1">Ribonuclease P protein component 4</fullName>
        <shortName evidence="1">RNase P component 4</shortName>
        <ecNumber evidence="1">3.1.26.5</ecNumber>
    </recommendedName>
    <alternativeName>
        <fullName evidence="1">Rpp21</fullName>
    </alternativeName>
</protein>
<organism>
    <name type="scientific">Thermococcus kodakarensis (strain ATCC BAA-918 / JCM 12380 / KOD1)</name>
    <name type="common">Pyrococcus kodakaraensis (strain KOD1)</name>
    <dbReference type="NCBI Taxonomy" id="69014"/>
    <lineage>
        <taxon>Archaea</taxon>
        <taxon>Methanobacteriati</taxon>
        <taxon>Methanobacteriota</taxon>
        <taxon>Thermococci</taxon>
        <taxon>Thermococcales</taxon>
        <taxon>Thermococcaceae</taxon>
        <taxon>Thermococcus</taxon>
    </lineage>
</organism>
<comment type="function">
    <text evidence="1">Part of ribonuclease P, a protein complex that generates mature tRNA molecules by cleaving their 5'-ends.</text>
</comment>
<comment type="catalytic activity">
    <reaction evidence="1">
        <text>Endonucleolytic cleavage of RNA, removing 5'-extranucleotides from tRNA precursor.</text>
        <dbReference type="EC" id="3.1.26.5"/>
    </reaction>
</comment>
<comment type="cofactor">
    <cofactor evidence="1">
        <name>Zn(2+)</name>
        <dbReference type="ChEBI" id="CHEBI:29105"/>
    </cofactor>
    <text evidence="1">Binds 1 zinc ion per subunit.</text>
</comment>
<comment type="subunit">
    <text evidence="1">Consists of a catalytic RNA component and at least 4-5 protein subunits.</text>
</comment>
<comment type="subcellular location">
    <subcellularLocation>
        <location evidence="1">Cytoplasm</location>
    </subcellularLocation>
</comment>
<comment type="similarity">
    <text evidence="1">Belongs to the eukaryotic/archaeal RNase P protein component 4 family.</text>
</comment>
<gene>
    <name evidence="1" type="primary">rnp4</name>
    <name type="ordered locus">TK0031</name>
</gene>
<reference key="1">
    <citation type="journal article" date="2005" name="Genome Res.">
        <title>Complete genome sequence of the hyperthermophilic archaeon Thermococcus kodakaraensis KOD1 and comparison with Pyrococcus genomes.</title>
        <authorList>
            <person name="Fukui T."/>
            <person name="Atomi H."/>
            <person name="Kanai T."/>
            <person name="Matsumi R."/>
            <person name="Fujiwara S."/>
            <person name="Imanaka T."/>
        </authorList>
    </citation>
    <scope>NUCLEOTIDE SEQUENCE [LARGE SCALE GENOMIC DNA]</scope>
    <source>
        <strain>ATCC BAA-918 / JCM 12380 / KOD1</strain>
    </source>
</reference>
<evidence type="ECO:0000255" key="1">
    <source>
        <dbReference type="HAMAP-Rule" id="MF_00757"/>
    </source>
</evidence>
<feature type="chain" id="PRO_0000153861" description="Ribonuclease P protein component 4">
    <location>
        <begin position="1"/>
        <end position="132"/>
    </location>
</feature>
<feature type="binding site" evidence="1">
    <location>
        <position position="67"/>
    </location>
    <ligand>
        <name>Zn(2+)</name>
        <dbReference type="ChEBI" id="CHEBI:29105"/>
    </ligand>
</feature>
<feature type="binding site" evidence="1">
    <location>
        <position position="70"/>
    </location>
    <ligand>
        <name>Zn(2+)</name>
        <dbReference type="ChEBI" id="CHEBI:29105"/>
    </ligand>
</feature>
<feature type="binding site" evidence="1">
    <location>
        <position position="96"/>
    </location>
    <ligand>
        <name>Zn(2+)</name>
        <dbReference type="ChEBI" id="CHEBI:29105"/>
    </ligand>
</feature>
<feature type="binding site" evidence="1">
    <location>
        <position position="99"/>
    </location>
    <ligand>
        <name>Zn(2+)</name>
        <dbReference type="ChEBI" id="CHEBI:29105"/>
    </ligand>
</feature>
<proteinExistence type="inferred from homology"/>